<reference key="1">
    <citation type="journal article" date="1997" name="Nature">
        <title>The nucleotide sequence of Saccharomyces cerevisiae chromosome XIII.</title>
        <authorList>
            <person name="Bowman S."/>
            <person name="Churcher C.M."/>
            <person name="Badcock K."/>
            <person name="Brown D."/>
            <person name="Chillingworth T."/>
            <person name="Connor R."/>
            <person name="Dedman K."/>
            <person name="Devlin K."/>
            <person name="Gentles S."/>
            <person name="Hamlin N."/>
            <person name="Hunt S."/>
            <person name="Jagels K."/>
            <person name="Lye G."/>
            <person name="Moule S."/>
            <person name="Odell C."/>
            <person name="Pearson D."/>
            <person name="Rajandream M.A."/>
            <person name="Rice P."/>
            <person name="Skelton J."/>
            <person name="Walsh S.V."/>
            <person name="Whitehead S."/>
            <person name="Barrell B.G."/>
        </authorList>
    </citation>
    <scope>NUCLEOTIDE SEQUENCE [LARGE SCALE GENOMIC DNA]</scope>
    <source>
        <strain>ATCC 204508 / S288c</strain>
    </source>
</reference>
<reference key="2">
    <citation type="journal article" date="2014" name="G3 (Bethesda)">
        <title>The reference genome sequence of Saccharomyces cerevisiae: Then and now.</title>
        <authorList>
            <person name="Engel S.R."/>
            <person name="Dietrich F.S."/>
            <person name="Fisk D.G."/>
            <person name="Binkley G."/>
            <person name="Balakrishnan R."/>
            <person name="Costanzo M.C."/>
            <person name="Dwight S.S."/>
            <person name="Hitz B.C."/>
            <person name="Karra K."/>
            <person name="Nash R.S."/>
            <person name="Weng S."/>
            <person name="Wong E.D."/>
            <person name="Lloyd P."/>
            <person name="Skrzypek M.S."/>
            <person name="Miyasato S.R."/>
            <person name="Simison M."/>
            <person name="Cherry J.M."/>
        </authorList>
    </citation>
    <scope>GENOME REANNOTATION</scope>
    <source>
        <strain>ATCC 204508 / S288c</strain>
    </source>
</reference>
<reference key="3">
    <citation type="journal article" date="2007" name="Genome Res.">
        <title>Approaching a complete repository of sequence-verified protein-encoding clones for Saccharomyces cerevisiae.</title>
        <authorList>
            <person name="Hu Y."/>
            <person name="Rolfs A."/>
            <person name="Bhullar B."/>
            <person name="Murthy T.V.S."/>
            <person name="Zhu C."/>
            <person name="Berger M.F."/>
            <person name="Camargo A.A."/>
            <person name="Kelley F."/>
            <person name="McCarron S."/>
            <person name="Jepson D."/>
            <person name="Richardson A."/>
            <person name="Raphael J."/>
            <person name="Moreira D."/>
            <person name="Taycher E."/>
            <person name="Zuo D."/>
            <person name="Mohr S."/>
            <person name="Kane M.F."/>
            <person name="Williamson J."/>
            <person name="Simpson A.J.G."/>
            <person name="Bulyk M.L."/>
            <person name="Harlow E."/>
            <person name="Marsischky G."/>
            <person name="Kolodner R.D."/>
            <person name="LaBaer J."/>
        </authorList>
    </citation>
    <scope>NUCLEOTIDE SEQUENCE [GENOMIC DNA]</scope>
    <source>
        <strain>ATCC 204508 / S288c</strain>
    </source>
</reference>
<protein>
    <recommendedName>
        <fullName>Uncharacterized protein YMR130W</fullName>
    </recommendedName>
</protein>
<keyword id="KW-0378">Hydrolase</keyword>
<keyword id="KW-1185">Reference proteome</keyword>
<organism>
    <name type="scientific">Saccharomyces cerevisiae (strain ATCC 204508 / S288c)</name>
    <name type="common">Baker's yeast</name>
    <dbReference type="NCBI Taxonomy" id="559292"/>
    <lineage>
        <taxon>Eukaryota</taxon>
        <taxon>Fungi</taxon>
        <taxon>Dikarya</taxon>
        <taxon>Ascomycota</taxon>
        <taxon>Saccharomycotina</taxon>
        <taxon>Saccharomycetes</taxon>
        <taxon>Saccharomycetales</taxon>
        <taxon>Saccharomycetaceae</taxon>
        <taxon>Saccharomyces</taxon>
    </lineage>
</organism>
<proteinExistence type="inferred from homology"/>
<feature type="chain" id="PRO_0000203300" description="Uncharacterized protein YMR130W">
    <location>
        <begin position="1"/>
        <end position="302"/>
    </location>
</feature>
<comment type="similarity">
    <text evidence="1">Belongs to the HAD-like hydrolase superfamily.</text>
</comment>
<dbReference type="EMBL" id="Z48622">
    <property type="protein sequence ID" value="CAA88555.1"/>
    <property type="molecule type" value="Genomic_DNA"/>
</dbReference>
<dbReference type="EMBL" id="AY557987">
    <property type="protein sequence ID" value="AAS56313.1"/>
    <property type="molecule type" value="Genomic_DNA"/>
</dbReference>
<dbReference type="EMBL" id="BK006946">
    <property type="protein sequence ID" value="DAA10027.1"/>
    <property type="molecule type" value="Genomic_DNA"/>
</dbReference>
<dbReference type="PIR" id="S53060">
    <property type="entry name" value="S53060"/>
</dbReference>
<dbReference type="SMR" id="Q04223"/>
<dbReference type="BioGRID" id="35307">
    <property type="interactions" value="45"/>
</dbReference>
<dbReference type="FunCoup" id="Q04223">
    <property type="interactions" value="214"/>
</dbReference>
<dbReference type="IntAct" id="Q04223">
    <property type="interactions" value="1"/>
</dbReference>
<dbReference type="STRING" id="4932.YMR130W"/>
<dbReference type="iPTMnet" id="Q04223"/>
<dbReference type="PaxDb" id="4932-YMR130W"/>
<dbReference type="PeptideAtlas" id="Q04223"/>
<dbReference type="EnsemblFungi" id="YMR130W_mRNA">
    <property type="protein sequence ID" value="YMR130W"/>
    <property type="gene ID" value="YMR130W"/>
</dbReference>
<dbReference type="KEGG" id="sce:YMR130W"/>
<dbReference type="AGR" id="SGD:S000004737"/>
<dbReference type="SGD" id="S000004737">
    <property type="gene designation" value="YMR130W"/>
</dbReference>
<dbReference type="VEuPathDB" id="FungiDB:YMR130W"/>
<dbReference type="eggNOG" id="KOG3085">
    <property type="taxonomic scope" value="Eukaryota"/>
</dbReference>
<dbReference type="HOGENOM" id="CLU_045011_8_0_1"/>
<dbReference type="InParanoid" id="Q04223"/>
<dbReference type="OMA" id="WWRQLIA"/>
<dbReference type="OrthoDB" id="444127at2759"/>
<dbReference type="BioCyc" id="YEAST:G3O-32823-MONOMER"/>
<dbReference type="BioGRID-ORCS" id="855160">
    <property type="hits" value="2 hits in 10 CRISPR screens"/>
</dbReference>
<dbReference type="PRO" id="PR:Q04223"/>
<dbReference type="Proteomes" id="UP000002311">
    <property type="component" value="Chromosome XIII"/>
</dbReference>
<dbReference type="RNAct" id="Q04223">
    <property type="molecule type" value="protein"/>
</dbReference>
<dbReference type="GO" id="GO:0005634">
    <property type="term" value="C:nucleus"/>
    <property type="evidence" value="ECO:0000318"/>
    <property type="project" value="GO_Central"/>
</dbReference>
<dbReference type="GO" id="GO:0016791">
    <property type="term" value="F:phosphatase activity"/>
    <property type="evidence" value="ECO:0007669"/>
    <property type="project" value="UniProtKB-ARBA"/>
</dbReference>
<dbReference type="CDD" id="cd16415">
    <property type="entry name" value="HAD_dREG-2_like"/>
    <property type="match status" value="1"/>
</dbReference>
<dbReference type="Gene3D" id="3.40.50.1000">
    <property type="entry name" value="HAD superfamily/HAD-like"/>
    <property type="match status" value="1"/>
</dbReference>
<dbReference type="Gene3D" id="1.10.150.720">
    <property type="entry name" value="Haloacid dehalogenase-like hydrolase"/>
    <property type="match status" value="1"/>
</dbReference>
<dbReference type="InterPro" id="IPR051828">
    <property type="entry name" value="HAD-like_hydrolase_domain"/>
</dbReference>
<dbReference type="InterPro" id="IPR036412">
    <property type="entry name" value="HAD-like_sf"/>
</dbReference>
<dbReference type="InterPro" id="IPR006439">
    <property type="entry name" value="HAD-SF_hydro_IA"/>
</dbReference>
<dbReference type="InterPro" id="IPR011949">
    <property type="entry name" value="HAD-SF_hydro_IA_REG-2-like"/>
</dbReference>
<dbReference type="InterPro" id="IPR044924">
    <property type="entry name" value="HAD-SF_hydro_IA_REG-2-like_cap"/>
</dbReference>
<dbReference type="InterPro" id="IPR023214">
    <property type="entry name" value="HAD_sf"/>
</dbReference>
<dbReference type="NCBIfam" id="TIGR02252">
    <property type="entry name" value="DREG-2"/>
    <property type="match status" value="1"/>
</dbReference>
<dbReference type="NCBIfam" id="TIGR01549">
    <property type="entry name" value="HAD-SF-IA-v1"/>
    <property type="match status" value="1"/>
</dbReference>
<dbReference type="PANTHER" id="PTHR46191">
    <property type="match status" value="1"/>
</dbReference>
<dbReference type="PANTHER" id="PTHR46191:SF2">
    <property type="entry name" value="HALOACID DEHALOGENASE-LIKE HYDROLASE DOMAIN-CONTAINING PROTEIN 3"/>
    <property type="match status" value="1"/>
</dbReference>
<dbReference type="Pfam" id="PF00702">
    <property type="entry name" value="Hydrolase"/>
    <property type="match status" value="1"/>
</dbReference>
<dbReference type="SFLD" id="SFLDG01129">
    <property type="entry name" value="C1.5:_HAD__Beta-PGM__Phosphata"/>
    <property type="match status" value="1"/>
</dbReference>
<dbReference type="SFLD" id="SFLDS00003">
    <property type="entry name" value="Haloacid_Dehalogenase"/>
    <property type="match status" value="1"/>
</dbReference>
<dbReference type="SUPFAM" id="SSF56784">
    <property type="entry name" value="HAD-like"/>
    <property type="match status" value="1"/>
</dbReference>
<gene>
    <name type="ordered locus">YMR130W</name>
    <name type="ORF">YM9553.06</name>
</gene>
<accession>Q04223</accession>
<accession>D6VZV3</accession>
<sequence>MTYPKRIPINAWSEVHRVARPLIITFDAYNTLYATKLPVMEQYCIVGRKYGIKANPSTLTNNFPHVFKKLKEDYPQYGKYSGIKPEQWWSILIRNVFAPNEIPDEMINEILMRFEGFDSYFVYPDLIKFLKDLKSRHPDVILGIVSNTDPIFYKLLKNIGLFETFSGHIYLSYELNLAKPDRAIFQYALDDIISKQPHLLEKYTREEILQHCFHIGDELKNDLEGAEAAGWTGILLDRNDKYGFLSNSISKPMRDEYKLSIDKIDNNSINTWEANTKQTDTLQLSERKYVVSNLEVLEELFP</sequence>
<name>YM14_YEAST</name>
<evidence type="ECO:0000305" key="1"/>